<name>PNCB_BURPS</name>
<dbReference type="EC" id="6.3.4.21" evidence="1"/>
<dbReference type="EMBL" id="BX571965">
    <property type="protein sequence ID" value="CAH36465.1"/>
    <property type="molecule type" value="Genomic_DNA"/>
</dbReference>
<dbReference type="RefSeq" id="WP_004192078.1">
    <property type="nucleotide sequence ID" value="NZ_CP009538.1"/>
</dbReference>
<dbReference type="RefSeq" id="YP_109054.1">
    <property type="nucleotide sequence ID" value="NC_006350.1"/>
</dbReference>
<dbReference type="SMR" id="Q63S63"/>
<dbReference type="STRING" id="272560.BPSL2462"/>
<dbReference type="GeneID" id="93061043"/>
<dbReference type="KEGG" id="bps:BPSL2462"/>
<dbReference type="PATRIC" id="fig|272560.51.peg.2928"/>
<dbReference type="eggNOG" id="COG1488">
    <property type="taxonomic scope" value="Bacteria"/>
</dbReference>
<dbReference type="UniPathway" id="UPA00253">
    <property type="reaction ID" value="UER00457"/>
</dbReference>
<dbReference type="Proteomes" id="UP000000605">
    <property type="component" value="Chromosome 1"/>
</dbReference>
<dbReference type="GO" id="GO:0005829">
    <property type="term" value="C:cytosol"/>
    <property type="evidence" value="ECO:0007669"/>
    <property type="project" value="TreeGrafter"/>
</dbReference>
<dbReference type="GO" id="GO:0004516">
    <property type="term" value="F:nicotinate phosphoribosyltransferase activity"/>
    <property type="evidence" value="ECO:0007669"/>
    <property type="project" value="UniProtKB-UniRule"/>
</dbReference>
<dbReference type="GO" id="GO:0034355">
    <property type="term" value="P:NAD biosynthetic process via the salvage pathway"/>
    <property type="evidence" value="ECO:0007669"/>
    <property type="project" value="TreeGrafter"/>
</dbReference>
<dbReference type="CDD" id="cd01401">
    <property type="entry name" value="PncB_like"/>
    <property type="match status" value="1"/>
</dbReference>
<dbReference type="Gene3D" id="3.20.140.10">
    <property type="entry name" value="nicotinate phosphoribosyltransferase"/>
    <property type="match status" value="1"/>
</dbReference>
<dbReference type="HAMAP" id="MF_00570">
    <property type="entry name" value="NAPRTase"/>
    <property type="match status" value="1"/>
</dbReference>
<dbReference type="InterPro" id="IPR041525">
    <property type="entry name" value="N/Namide_PRibTrfase"/>
</dbReference>
<dbReference type="InterPro" id="IPR040727">
    <property type="entry name" value="NAPRTase_N"/>
</dbReference>
<dbReference type="InterPro" id="IPR006406">
    <property type="entry name" value="Nic_PRibTrfase"/>
</dbReference>
<dbReference type="InterPro" id="IPR007229">
    <property type="entry name" value="Nic_PRibTrfase-Fam"/>
</dbReference>
<dbReference type="InterPro" id="IPR036068">
    <property type="entry name" value="Nicotinate_pribotase-like_C"/>
</dbReference>
<dbReference type="NCBIfam" id="TIGR01514">
    <property type="entry name" value="NAPRTase"/>
    <property type="match status" value="1"/>
</dbReference>
<dbReference type="NCBIfam" id="NF003704">
    <property type="entry name" value="PRK05321.1"/>
    <property type="match status" value="1"/>
</dbReference>
<dbReference type="PANTHER" id="PTHR11098">
    <property type="entry name" value="NICOTINATE PHOSPHORIBOSYLTRANSFERASE"/>
    <property type="match status" value="1"/>
</dbReference>
<dbReference type="PANTHER" id="PTHR11098:SF1">
    <property type="entry name" value="NICOTINATE PHOSPHORIBOSYLTRANSFERASE"/>
    <property type="match status" value="1"/>
</dbReference>
<dbReference type="Pfam" id="PF04095">
    <property type="entry name" value="NAPRTase"/>
    <property type="match status" value="1"/>
</dbReference>
<dbReference type="Pfam" id="PF17767">
    <property type="entry name" value="NAPRTase_N"/>
    <property type="match status" value="1"/>
</dbReference>
<dbReference type="PIRSF" id="PIRSF000484">
    <property type="entry name" value="NAPRT"/>
    <property type="match status" value="1"/>
</dbReference>
<dbReference type="SUPFAM" id="SSF51690">
    <property type="entry name" value="Nicotinate/Quinolinate PRTase C-terminal domain-like"/>
    <property type="match status" value="1"/>
</dbReference>
<dbReference type="SUPFAM" id="SSF54675">
    <property type="entry name" value="Nicotinate/Quinolinate PRTase N-terminal domain-like"/>
    <property type="match status" value="1"/>
</dbReference>
<organism>
    <name type="scientific">Burkholderia pseudomallei (strain K96243)</name>
    <dbReference type="NCBI Taxonomy" id="272560"/>
    <lineage>
        <taxon>Bacteria</taxon>
        <taxon>Pseudomonadati</taxon>
        <taxon>Pseudomonadota</taxon>
        <taxon>Betaproteobacteria</taxon>
        <taxon>Burkholderiales</taxon>
        <taxon>Burkholderiaceae</taxon>
        <taxon>Burkholderia</taxon>
        <taxon>pseudomallei group</taxon>
    </lineage>
</organism>
<keyword id="KW-0436">Ligase</keyword>
<keyword id="KW-0597">Phosphoprotein</keyword>
<keyword id="KW-0662">Pyridine nucleotide biosynthesis</keyword>
<keyword id="KW-1185">Reference proteome</keyword>
<accession>Q63S63</accession>
<feature type="chain" id="PRO_0000205826" description="Nicotinate phosphoribosyltransferase">
    <location>
        <begin position="1"/>
        <end position="399"/>
    </location>
</feature>
<feature type="modified residue" description="Phosphohistidine; by autocatalysis" evidence="1">
    <location>
        <position position="217"/>
    </location>
</feature>
<comment type="function">
    <text evidence="1">Catalyzes the synthesis of beta-nicotinate D-ribonucleotide from nicotinate and 5-phospho-D-ribose 1-phosphate at the expense of ATP.</text>
</comment>
<comment type="catalytic activity">
    <reaction evidence="1">
        <text>nicotinate + 5-phospho-alpha-D-ribose 1-diphosphate + ATP + H2O = nicotinate beta-D-ribonucleotide + ADP + phosphate + diphosphate</text>
        <dbReference type="Rhea" id="RHEA:36163"/>
        <dbReference type="ChEBI" id="CHEBI:15377"/>
        <dbReference type="ChEBI" id="CHEBI:30616"/>
        <dbReference type="ChEBI" id="CHEBI:32544"/>
        <dbReference type="ChEBI" id="CHEBI:33019"/>
        <dbReference type="ChEBI" id="CHEBI:43474"/>
        <dbReference type="ChEBI" id="CHEBI:57502"/>
        <dbReference type="ChEBI" id="CHEBI:58017"/>
        <dbReference type="ChEBI" id="CHEBI:456216"/>
        <dbReference type="EC" id="6.3.4.21"/>
    </reaction>
</comment>
<comment type="pathway">
    <text evidence="1">Cofactor biosynthesis; NAD(+) biosynthesis; nicotinate D-ribonucleotide from nicotinate: step 1/1.</text>
</comment>
<comment type="PTM">
    <text evidence="1">Transiently phosphorylated on a His residue during the reaction cycle. Phosphorylation strongly increases the affinity for substrates and increases the rate of nicotinate D-ribonucleotide production. Dephosphorylation regenerates the low-affinity form of the enzyme, leading to product release.</text>
</comment>
<comment type="similarity">
    <text evidence="1">Belongs to the NAPRTase family.</text>
</comment>
<proteinExistence type="inferred from homology"/>
<sequence>MIITSLLDTDLYKFTMMQVVLHHFPAASVEYRFKCRTPGVDLVPYIDEIRAEVRSLCELRFTDSELDYLRRLRFVKSDFVDFLALFHLNEKYISITPSQKGGGEIDIEIKGPWLHTILFEIPVLAIVNEVYFRNTQRRPDYREGRGRLREKIKLLGAKPEFADCKIADYGTRRRFSKVWHEEVLRTLQDGLGPQFAGTSNVYYAMTHEITPLGTMAHEYLQACQALGPRLRDSQTYGLEMWAKEYRGDLGIALSDVYGMDAFLRDFDMYFCKLFDGARHDSGDPFDWGERLIKHYEENRCDPRTKVLVFSDALDIPKVMQLYARFRGRCKLAFGVGTNLTNDLGYQPLQIVIKMVRCNGQPVAKLSDSPGKSMCDDKAYLAYLRQVFGITQPPDDDAGK</sequence>
<protein>
    <recommendedName>
        <fullName evidence="1">Nicotinate phosphoribosyltransferase</fullName>
        <shortName evidence="1">NAPRTase</shortName>
        <ecNumber evidence="1">6.3.4.21</ecNumber>
    </recommendedName>
</protein>
<reference key="1">
    <citation type="journal article" date="2004" name="Proc. Natl. Acad. Sci. U.S.A.">
        <title>Genomic plasticity of the causative agent of melioidosis, Burkholderia pseudomallei.</title>
        <authorList>
            <person name="Holden M.T.G."/>
            <person name="Titball R.W."/>
            <person name="Peacock S.J."/>
            <person name="Cerdeno-Tarraga A.-M."/>
            <person name="Atkins T."/>
            <person name="Crossman L.C."/>
            <person name="Pitt T."/>
            <person name="Churcher C."/>
            <person name="Mungall K.L."/>
            <person name="Bentley S.D."/>
            <person name="Sebaihia M."/>
            <person name="Thomson N.R."/>
            <person name="Bason N."/>
            <person name="Beacham I.R."/>
            <person name="Brooks K."/>
            <person name="Brown K.A."/>
            <person name="Brown N.F."/>
            <person name="Challis G.L."/>
            <person name="Cherevach I."/>
            <person name="Chillingworth T."/>
            <person name="Cronin A."/>
            <person name="Crossett B."/>
            <person name="Davis P."/>
            <person name="DeShazer D."/>
            <person name="Feltwell T."/>
            <person name="Fraser A."/>
            <person name="Hance Z."/>
            <person name="Hauser H."/>
            <person name="Holroyd S."/>
            <person name="Jagels K."/>
            <person name="Keith K.E."/>
            <person name="Maddison M."/>
            <person name="Moule S."/>
            <person name="Price C."/>
            <person name="Quail M.A."/>
            <person name="Rabbinowitsch E."/>
            <person name="Rutherford K."/>
            <person name="Sanders M."/>
            <person name="Simmonds M."/>
            <person name="Songsivilai S."/>
            <person name="Stevens K."/>
            <person name="Tumapa S."/>
            <person name="Vesaratchavest M."/>
            <person name="Whitehead S."/>
            <person name="Yeats C."/>
            <person name="Barrell B.G."/>
            <person name="Oyston P.C.F."/>
            <person name="Parkhill J."/>
        </authorList>
    </citation>
    <scope>NUCLEOTIDE SEQUENCE [LARGE SCALE GENOMIC DNA]</scope>
    <source>
        <strain>K96243</strain>
    </source>
</reference>
<evidence type="ECO:0000255" key="1">
    <source>
        <dbReference type="HAMAP-Rule" id="MF_00570"/>
    </source>
</evidence>
<gene>
    <name evidence="1" type="primary">pncB</name>
    <name type="ordered locus">BPSL2462</name>
</gene>